<sequence length="112" mass="12348">MPDYLVVLESAWTIRDADSVDDAISIAISEAGKRLNPTAKFVEVEAGILSCPYCEEELPCTLIVARTALVGVKMEMKVYKADSEEHARRIALSTIGKALRDIPLEIIEVEEL</sequence>
<feature type="chain" id="PRO_1000066789" description="UPF0212 protein Mhun_0078">
    <location>
        <begin position="1"/>
        <end position="112"/>
    </location>
</feature>
<accession>Q2FQN9</accession>
<proteinExistence type="inferred from homology"/>
<comment type="similarity">
    <text evidence="1">Belongs to the UPF0212 family.</text>
</comment>
<keyword id="KW-1185">Reference proteome</keyword>
<organism>
    <name type="scientific">Methanospirillum hungatei JF-1 (strain ATCC 27890 / DSM 864 / NBRC 100397 / JF-1)</name>
    <dbReference type="NCBI Taxonomy" id="323259"/>
    <lineage>
        <taxon>Archaea</taxon>
        <taxon>Methanobacteriati</taxon>
        <taxon>Methanobacteriota</taxon>
        <taxon>Stenosarchaea group</taxon>
        <taxon>Methanomicrobia</taxon>
        <taxon>Methanomicrobiales</taxon>
        <taxon>Methanospirillaceae</taxon>
        <taxon>Methanospirillum</taxon>
    </lineage>
</organism>
<evidence type="ECO:0000255" key="1">
    <source>
        <dbReference type="HAMAP-Rule" id="MF_01223"/>
    </source>
</evidence>
<name>Y078_METHJ</name>
<protein>
    <recommendedName>
        <fullName evidence="1">UPF0212 protein Mhun_0078</fullName>
    </recommendedName>
</protein>
<dbReference type="EMBL" id="CP000254">
    <property type="protein sequence ID" value="ABD39856.1"/>
    <property type="molecule type" value="Genomic_DNA"/>
</dbReference>
<dbReference type="RefSeq" id="WP_011447152.1">
    <property type="nucleotide sequence ID" value="NC_007796.1"/>
</dbReference>
<dbReference type="FunCoup" id="Q2FQN9">
    <property type="interactions" value="1"/>
</dbReference>
<dbReference type="STRING" id="323259.Mhun_0078"/>
<dbReference type="EnsemblBacteria" id="ABD39856">
    <property type="protein sequence ID" value="ABD39856"/>
    <property type="gene ID" value="Mhun_0078"/>
</dbReference>
<dbReference type="GeneID" id="3922191"/>
<dbReference type="KEGG" id="mhu:Mhun_0078"/>
<dbReference type="eggNOG" id="arCOG02119">
    <property type="taxonomic scope" value="Archaea"/>
</dbReference>
<dbReference type="HOGENOM" id="CLU_138334_0_0_2"/>
<dbReference type="InParanoid" id="Q2FQN9"/>
<dbReference type="OrthoDB" id="63517at2157"/>
<dbReference type="Proteomes" id="UP000001941">
    <property type="component" value="Chromosome"/>
</dbReference>
<dbReference type="HAMAP" id="MF_01223">
    <property type="entry name" value="UPF0212"/>
    <property type="match status" value="1"/>
</dbReference>
<dbReference type="InterPro" id="IPR007564">
    <property type="entry name" value="UPF0212"/>
</dbReference>
<dbReference type="NCBIfam" id="NF003035">
    <property type="entry name" value="PRK03922.1"/>
    <property type="match status" value="1"/>
</dbReference>
<dbReference type="PANTHER" id="PTHR42199">
    <property type="entry name" value="UPF0212 PROTEIN MJ0068"/>
    <property type="match status" value="1"/>
</dbReference>
<dbReference type="PANTHER" id="PTHR42199:SF1">
    <property type="entry name" value="UPF0212 PROTEIN TK1194"/>
    <property type="match status" value="1"/>
</dbReference>
<dbReference type="Pfam" id="PF04475">
    <property type="entry name" value="DUF555"/>
    <property type="match status" value="1"/>
</dbReference>
<dbReference type="PIRSF" id="PIRSF016934">
    <property type="entry name" value="UCP016934"/>
    <property type="match status" value="1"/>
</dbReference>
<gene>
    <name type="ordered locus">Mhun_0078</name>
</gene>
<reference key="1">
    <citation type="journal article" date="2016" name="Stand. Genomic Sci.">
        <title>Complete genome sequence of Methanospirillum hungatei type strain JF1.</title>
        <authorList>
            <person name="Gunsalus R.P."/>
            <person name="Cook L.E."/>
            <person name="Crable B."/>
            <person name="Rohlin L."/>
            <person name="McDonald E."/>
            <person name="Mouttaki H."/>
            <person name="Sieber J.R."/>
            <person name="Poweleit N."/>
            <person name="Zhou H."/>
            <person name="Lapidus A.L."/>
            <person name="Daligault H.E."/>
            <person name="Land M."/>
            <person name="Gilna P."/>
            <person name="Ivanova N."/>
            <person name="Kyrpides N."/>
            <person name="Culley D.E."/>
            <person name="McInerney M.J."/>
        </authorList>
    </citation>
    <scope>NUCLEOTIDE SEQUENCE [LARGE SCALE GENOMIC DNA]</scope>
    <source>
        <strain>ATCC 27890 / DSM 864 / NBRC 100397 / JF-1</strain>
    </source>
</reference>